<sequence>MAVLSAPGLRGFRILGLRSSVGPAVQARSVHQSVATDGPSSTQPALPKARAVAPKPSSRGEYVVAKLDDLVNWARRSSLWPMTFGLACCAVEMMHMAAPRYDMDRFGVVFRASPRQSDVMIVAGTLTNKMAPALRKVYDQMPEPRYVVSMGSCANGGGYYHYSYSVVRGCDRIVPVDIYIPGCPPTAEALLYGILQLQRKIKRERRLQIWYRR</sequence>
<feature type="transit peptide" description="Mitochondrion" evidence="3">
    <location>
        <begin position="1"/>
        <end position="37"/>
    </location>
</feature>
<feature type="chain" id="PRO_0000251873" description="NADH dehydrogenase [ubiquinone] iron-sulfur protein 7, mitochondrial">
    <location>
        <begin position="38"/>
        <end position="213"/>
    </location>
</feature>
<feature type="region of interest" description="Disordered" evidence="4">
    <location>
        <begin position="30"/>
        <end position="53"/>
    </location>
</feature>
<feature type="compositionally biased region" description="Polar residues" evidence="4">
    <location>
        <begin position="30"/>
        <end position="44"/>
    </location>
</feature>
<feature type="binding site" evidence="3">
    <location>
        <position position="88"/>
    </location>
    <ligand>
        <name>[4Fe-4S] cluster</name>
        <dbReference type="ChEBI" id="CHEBI:49883"/>
    </ligand>
</feature>
<feature type="binding site" evidence="3">
    <location>
        <position position="89"/>
    </location>
    <ligand>
        <name>[4Fe-4S] cluster</name>
        <dbReference type="ChEBI" id="CHEBI:49883"/>
    </ligand>
</feature>
<feature type="binding site" evidence="3">
    <location>
        <position position="153"/>
    </location>
    <ligand>
        <name>[4Fe-4S] cluster</name>
        <dbReference type="ChEBI" id="CHEBI:49883"/>
    </ligand>
</feature>
<feature type="binding site" evidence="3">
    <location>
        <position position="183"/>
    </location>
    <ligand>
        <name>[4Fe-4S] cluster</name>
        <dbReference type="ChEBI" id="CHEBI:49883"/>
    </ligand>
</feature>
<feature type="modified residue" description="Hydroxyarginine" evidence="2">
    <location>
        <position position="111"/>
    </location>
</feature>
<protein>
    <recommendedName>
        <fullName>NADH dehydrogenase [ubiquinone] iron-sulfur protein 7, mitochondrial</fullName>
        <ecNumber evidence="1">7.1.1.2</ecNumber>
    </recommendedName>
    <alternativeName>
        <fullName>Complex I-20kD</fullName>
        <shortName>CI-20kD</shortName>
    </alternativeName>
    <alternativeName>
        <fullName>NADH-ubiquinone oxidoreductase 20 kDa subunit</fullName>
    </alternativeName>
</protein>
<gene>
    <name type="primary">NDUFS7</name>
</gene>
<comment type="function">
    <text evidence="1">Core subunit of the mitochondrial membrane respiratory chain NADH dehydrogenase (Complex I) which catalyzes electron transfer from NADH through the respiratory chain, using ubiquinone as an electron acceptor. Essential for the catalytic activity of complex I.</text>
</comment>
<comment type="catalytic activity">
    <reaction evidence="1">
        <text>a ubiquinone + NADH + 5 H(+)(in) = a ubiquinol + NAD(+) + 4 H(+)(out)</text>
        <dbReference type="Rhea" id="RHEA:29091"/>
        <dbReference type="Rhea" id="RHEA-COMP:9565"/>
        <dbReference type="Rhea" id="RHEA-COMP:9566"/>
        <dbReference type="ChEBI" id="CHEBI:15378"/>
        <dbReference type="ChEBI" id="CHEBI:16389"/>
        <dbReference type="ChEBI" id="CHEBI:17976"/>
        <dbReference type="ChEBI" id="CHEBI:57540"/>
        <dbReference type="ChEBI" id="CHEBI:57945"/>
        <dbReference type="EC" id="7.1.1.2"/>
    </reaction>
</comment>
<comment type="cofactor">
    <cofactor evidence="5">
        <name>[4Fe-4S] cluster</name>
        <dbReference type="ChEBI" id="CHEBI:49883"/>
    </cofactor>
    <text evidence="5">Binds 1 [4Fe-4S] cluster.</text>
</comment>
<comment type="subunit">
    <text evidence="2">Core subunit of respiratory chain NADH dehydrogenase (Complex I) which is composed of 45 different subunits (By similarity). This is a component of the iron-sulfur (IP) fragment of the enzyme (By similarity).</text>
</comment>
<comment type="subcellular location">
    <subcellularLocation>
        <location evidence="2">Mitochondrion inner membrane</location>
        <topology evidence="2">Peripheral membrane protein</topology>
        <orientation evidence="2">Matrix side</orientation>
    </subcellularLocation>
</comment>
<comment type="PTM">
    <text evidence="1">Hydroxylated ar Arg-111 by NDUFAF5 early in the pathway of assembly of complex I, before the formation of the juncture between peripheral and membrane arms.</text>
</comment>
<comment type="similarity">
    <text evidence="5">Belongs to the complex I 20 kDa subunit family.</text>
</comment>
<proteinExistence type="evidence at transcript level"/>
<reference key="1">
    <citation type="journal article" date="2006" name="Gene">
        <title>Adaptive selection of mitochondrial complex I subunits during primate radiation.</title>
        <authorList>
            <person name="Mishmar D."/>
            <person name="Ruiz-Pesini E."/>
            <person name="Mondragon-Palomino M."/>
            <person name="Procaccio V."/>
            <person name="Gaut B."/>
            <person name="Wallace D.C."/>
        </authorList>
    </citation>
    <scope>NUCLEOTIDE SEQUENCE [MRNA]</scope>
</reference>
<evidence type="ECO:0000250" key="1">
    <source>
        <dbReference type="UniProtKB" id="O75251"/>
    </source>
</evidence>
<evidence type="ECO:0000250" key="2">
    <source>
        <dbReference type="UniProtKB" id="P42026"/>
    </source>
</evidence>
<evidence type="ECO:0000255" key="3"/>
<evidence type="ECO:0000256" key="4">
    <source>
        <dbReference type="SAM" id="MobiDB-lite"/>
    </source>
</evidence>
<evidence type="ECO:0000305" key="5"/>
<organism>
    <name type="scientific">Pan troglodytes</name>
    <name type="common">Chimpanzee</name>
    <dbReference type="NCBI Taxonomy" id="9598"/>
    <lineage>
        <taxon>Eukaryota</taxon>
        <taxon>Metazoa</taxon>
        <taxon>Chordata</taxon>
        <taxon>Craniata</taxon>
        <taxon>Vertebrata</taxon>
        <taxon>Euteleostomi</taxon>
        <taxon>Mammalia</taxon>
        <taxon>Eutheria</taxon>
        <taxon>Euarchontoglires</taxon>
        <taxon>Primates</taxon>
        <taxon>Haplorrhini</taxon>
        <taxon>Catarrhini</taxon>
        <taxon>Hominidae</taxon>
        <taxon>Pan</taxon>
    </lineage>
</organism>
<keyword id="KW-0004">4Fe-4S</keyword>
<keyword id="KW-0249">Electron transport</keyword>
<keyword id="KW-0379">Hydroxylation</keyword>
<keyword id="KW-0408">Iron</keyword>
<keyword id="KW-0411">Iron-sulfur</keyword>
<keyword id="KW-0472">Membrane</keyword>
<keyword id="KW-0479">Metal-binding</keyword>
<keyword id="KW-0496">Mitochondrion</keyword>
<keyword id="KW-0999">Mitochondrion inner membrane</keyword>
<keyword id="KW-0520">NAD</keyword>
<keyword id="KW-0560">Oxidoreductase</keyword>
<keyword id="KW-1185">Reference proteome</keyword>
<keyword id="KW-0679">Respiratory chain</keyword>
<keyword id="KW-0809">Transit peptide</keyword>
<keyword id="KW-1278">Translocase</keyword>
<keyword id="KW-0813">Transport</keyword>
<keyword id="KW-0830">Ubiquinone</keyword>
<name>NDUS7_PANTR</name>
<dbReference type="EC" id="7.1.1.2" evidence="1"/>
<dbReference type="EMBL" id="DQ885654">
    <property type="protein sequence ID" value="ABH12163.1"/>
    <property type="molecule type" value="mRNA"/>
</dbReference>
<dbReference type="RefSeq" id="NP_001103713.1">
    <property type="nucleotide sequence ID" value="NM_001110243.1"/>
</dbReference>
<dbReference type="SMR" id="Q0MQI0"/>
<dbReference type="FunCoup" id="Q0MQI0">
    <property type="interactions" value="950"/>
</dbReference>
<dbReference type="STRING" id="9598.ENSPTRP00000055005"/>
<dbReference type="GeneID" id="100126358"/>
<dbReference type="KEGG" id="ptr:100126358"/>
<dbReference type="CTD" id="374291"/>
<dbReference type="InParanoid" id="Q0MQI0"/>
<dbReference type="OrthoDB" id="16466at9604"/>
<dbReference type="Proteomes" id="UP000002277">
    <property type="component" value="Unplaced"/>
</dbReference>
<dbReference type="GO" id="GO:0005743">
    <property type="term" value="C:mitochondrial inner membrane"/>
    <property type="evidence" value="ECO:0000250"/>
    <property type="project" value="UniProtKB"/>
</dbReference>
<dbReference type="GO" id="GO:0045271">
    <property type="term" value="C:respiratory chain complex I"/>
    <property type="evidence" value="ECO:0000250"/>
    <property type="project" value="UniProtKB"/>
</dbReference>
<dbReference type="GO" id="GO:0051539">
    <property type="term" value="F:4 iron, 4 sulfur cluster binding"/>
    <property type="evidence" value="ECO:0007669"/>
    <property type="project" value="UniProtKB-KW"/>
</dbReference>
<dbReference type="GO" id="GO:0046872">
    <property type="term" value="F:metal ion binding"/>
    <property type="evidence" value="ECO:0007669"/>
    <property type="project" value="UniProtKB-KW"/>
</dbReference>
<dbReference type="GO" id="GO:0008137">
    <property type="term" value="F:NADH dehydrogenase (ubiquinone) activity"/>
    <property type="evidence" value="ECO:0000250"/>
    <property type="project" value="UniProtKB"/>
</dbReference>
<dbReference type="GO" id="GO:0048038">
    <property type="term" value="F:quinone binding"/>
    <property type="evidence" value="ECO:0007669"/>
    <property type="project" value="InterPro"/>
</dbReference>
<dbReference type="GO" id="GO:0009060">
    <property type="term" value="P:aerobic respiration"/>
    <property type="evidence" value="ECO:0000318"/>
    <property type="project" value="GO_Central"/>
</dbReference>
<dbReference type="GO" id="GO:0015990">
    <property type="term" value="P:electron transport coupled proton transport"/>
    <property type="evidence" value="ECO:0000318"/>
    <property type="project" value="GO_Central"/>
</dbReference>
<dbReference type="GO" id="GO:0006120">
    <property type="term" value="P:mitochondrial electron transport, NADH to ubiquinone"/>
    <property type="evidence" value="ECO:0000250"/>
    <property type="project" value="UniProtKB"/>
</dbReference>
<dbReference type="GO" id="GO:0032981">
    <property type="term" value="P:mitochondrial respiratory chain complex I assembly"/>
    <property type="evidence" value="ECO:0000250"/>
    <property type="project" value="UniProtKB"/>
</dbReference>
<dbReference type="FunFam" id="3.40.50.12280:FF:000001">
    <property type="entry name" value="NADH-quinone oxidoreductase subunit B 2"/>
    <property type="match status" value="1"/>
</dbReference>
<dbReference type="Gene3D" id="3.40.50.12280">
    <property type="match status" value="1"/>
</dbReference>
<dbReference type="HAMAP" id="MF_01356">
    <property type="entry name" value="NDH1_NuoB"/>
    <property type="match status" value="1"/>
</dbReference>
<dbReference type="InterPro" id="IPR006137">
    <property type="entry name" value="NADH_UbQ_OxRdtase-like_20kDa"/>
</dbReference>
<dbReference type="InterPro" id="IPR006138">
    <property type="entry name" value="NADH_UQ_OxRdtase_20Kd_su"/>
</dbReference>
<dbReference type="NCBIfam" id="TIGR01957">
    <property type="entry name" value="nuoB_fam"/>
    <property type="match status" value="1"/>
</dbReference>
<dbReference type="NCBIfam" id="NF005012">
    <property type="entry name" value="PRK06411.1"/>
    <property type="match status" value="1"/>
</dbReference>
<dbReference type="PANTHER" id="PTHR11995">
    <property type="entry name" value="NADH DEHYDROGENASE"/>
    <property type="match status" value="1"/>
</dbReference>
<dbReference type="PANTHER" id="PTHR11995:SF22">
    <property type="entry name" value="NADH DEHYDROGENASE [UBIQUINONE] IRON-SULFUR PROTEIN 7, MITOCHONDRIAL"/>
    <property type="match status" value="1"/>
</dbReference>
<dbReference type="Pfam" id="PF01058">
    <property type="entry name" value="Oxidored_q6"/>
    <property type="match status" value="1"/>
</dbReference>
<dbReference type="SUPFAM" id="SSF56770">
    <property type="entry name" value="HydA/Nqo6-like"/>
    <property type="match status" value="1"/>
</dbReference>
<dbReference type="PROSITE" id="PS01150">
    <property type="entry name" value="COMPLEX1_20K"/>
    <property type="match status" value="1"/>
</dbReference>
<accession>Q0MQI0</accession>